<protein>
    <recommendedName>
        <fullName evidence="1">Ribosome maturation factor RimP</fullName>
    </recommendedName>
</protein>
<sequence length="156" mass="17668">MDKKVTEVVEAFAQPIVEELNLELVDVEYVKEGQDWFLRVFIDSEKGVDIEECGAVSERLSEALDKEDPIPHLYFLDVSSPGAERPLKKEKDFQQAVGKQVAIKTYEPIDGEKMFEGKLLSYDGTTITLLLTIKTRKKEIQISMDKVANARLAVTF</sequence>
<proteinExistence type="inferred from homology"/>
<dbReference type="EMBL" id="AE016877">
    <property type="protein sequence ID" value="AAP10738.1"/>
    <property type="molecule type" value="Genomic_DNA"/>
</dbReference>
<dbReference type="RefSeq" id="NP_833537.1">
    <property type="nucleotide sequence ID" value="NC_004722.1"/>
</dbReference>
<dbReference type="RefSeq" id="WP_000359096.1">
    <property type="nucleotide sequence ID" value="NZ_CP138336.1"/>
</dbReference>
<dbReference type="SMR" id="Q812X5"/>
<dbReference type="STRING" id="226900.BC_3815"/>
<dbReference type="KEGG" id="bce:BC3815"/>
<dbReference type="PATRIC" id="fig|226900.8.peg.3932"/>
<dbReference type="HOGENOM" id="CLU_070525_2_0_9"/>
<dbReference type="OrthoDB" id="9805006at2"/>
<dbReference type="Proteomes" id="UP000001417">
    <property type="component" value="Chromosome"/>
</dbReference>
<dbReference type="GO" id="GO:0005829">
    <property type="term" value="C:cytosol"/>
    <property type="evidence" value="ECO:0000318"/>
    <property type="project" value="GO_Central"/>
</dbReference>
<dbReference type="GO" id="GO:0000028">
    <property type="term" value="P:ribosomal small subunit assembly"/>
    <property type="evidence" value="ECO:0000318"/>
    <property type="project" value="GO_Central"/>
</dbReference>
<dbReference type="GO" id="GO:0006412">
    <property type="term" value="P:translation"/>
    <property type="evidence" value="ECO:0000318"/>
    <property type="project" value="GO_Central"/>
</dbReference>
<dbReference type="CDD" id="cd01734">
    <property type="entry name" value="YlxS_C"/>
    <property type="match status" value="1"/>
</dbReference>
<dbReference type="FunFam" id="2.30.30.180:FF:000002">
    <property type="entry name" value="Ribosome maturation factor RimP"/>
    <property type="match status" value="1"/>
</dbReference>
<dbReference type="FunFam" id="3.30.300.70:FF:000001">
    <property type="entry name" value="Ribosome maturation factor RimP"/>
    <property type="match status" value="1"/>
</dbReference>
<dbReference type="Gene3D" id="2.30.30.180">
    <property type="entry name" value="Ribosome maturation factor RimP, C-terminal domain"/>
    <property type="match status" value="1"/>
</dbReference>
<dbReference type="Gene3D" id="3.30.300.70">
    <property type="entry name" value="RimP-like superfamily, N-terminal"/>
    <property type="match status" value="1"/>
</dbReference>
<dbReference type="HAMAP" id="MF_01077">
    <property type="entry name" value="RimP"/>
    <property type="match status" value="1"/>
</dbReference>
<dbReference type="InterPro" id="IPR003728">
    <property type="entry name" value="Ribosome_maturation_RimP"/>
</dbReference>
<dbReference type="InterPro" id="IPR028998">
    <property type="entry name" value="RimP_C"/>
</dbReference>
<dbReference type="InterPro" id="IPR036847">
    <property type="entry name" value="RimP_C_sf"/>
</dbReference>
<dbReference type="InterPro" id="IPR028989">
    <property type="entry name" value="RimP_N"/>
</dbReference>
<dbReference type="InterPro" id="IPR035956">
    <property type="entry name" value="RimP_N_sf"/>
</dbReference>
<dbReference type="NCBIfam" id="NF000928">
    <property type="entry name" value="PRK00092.1-2"/>
    <property type="match status" value="1"/>
</dbReference>
<dbReference type="PANTHER" id="PTHR33867">
    <property type="entry name" value="RIBOSOME MATURATION FACTOR RIMP"/>
    <property type="match status" value="1"/>
</dbReference>
<dbReference type="PANTHER" id="PTHR33867:SF1">
    <property type="entry name" value="RIBOSOME MATURATION FACTOR RIMP"/>
    <property type="match status" value="1"/>
</dbReference>
<dbReference type="Pfam" id="PF17384">
    <property type="entry name" value="DUF150_C"/>
    <property type="match status" value="1"/>
</dbReference>
<dbReference type="Pfam" id="PF02576">
    <property type="entry name" value="RimP_N"/>
    <property type="match status" value="1"/>
</dbReference>
<dbReference type="SUPFAM" id="SSF74942">
    <property type="entry name" value="YhbC-like, C-terminal domain"/>
    <property type="match status" value="1"/>
</dbReference>
<dbReference type="SUPFAM" id="SSF75420">
    <property type="entry name" value="YhbC-like, N-terminal domain"/>
    <property type="match status" value="1"/>
</dbReference>
<feature type="chain" id="PRO_0000181842" description="Ribosome maturation factor RimP">
    <location>
        <begin position="1"/>
        <end position="156"/>
    </location>
</feature>
<accession>Q812X5</accession>
<organism>
    <name type="scientific">Bacillus cereus (strain ATCC 14579 / DSM 31 / CCUG 7414 / JCM 2152 / NBRC 15305 / NCIMB 9373 / NCTC 2599 / NRRL B-3711)</name>
    <dbReference type="NCBI Taxonomy" id="226900"/>
    <lineage>
        <taxon>Bacteria</taxon>
        <taxon>Bacillati</taxon>
        <taxon>Bacillota</taxon>
        <taxon>Bacilli</taxon>
        <taxon>Bacillales</taxon>
        <taxon>Bacillaceae</taxon>
        <taxon>Bacillus</taxon>
        <taxon>Bacillus cereus group</taxon>
    </lineage>
</organism>
<evidence type="ECO:0000255" key="1">
    <source>
        <dbReference type="HAMAP-Rule" id="MF_01077"/>
    </source>
</evidence>
<comment type="function">
    <text evidence="1">Required for maturation of 30S ribosomal subunits.</text>
</comment>
<comment type="subcellular location">
    <subcellularLocation>
        <location evidence="1">Cytoplasm</location>
    </subcellularLocation>
</comment>
<comment type="similarity">
    <text evidence="1">Belongs to the RimP family.</text>
</comment>
<keyword id="KW-0963">Cytoplasm</keyword>
<keyword id="KW-1185">Reference proteome</keyword>
<keyword id="KW-0690">Ribosome biogenesis</keyword>
<name>RIMP_BACCR</name>
<gene>
    <name evidence="1" type="primary">rimP</name>
    <name type="ordered locus">BC_3815</name>
</gene>
<reference key="1">
    <citation type="journal article" date="2003" name="Nature">
        <title>Genome sequence of Bacillus cereus and comparative analysis with Bacillus anthracis.</title>
        <authorList>
            <person name="Ivanova N."/>
            <person name="Sorokin A."/>
            <person name="Anderson I."/>
            <person name="Galleron N."/>
            <person name="Candelon B."/>
            <person name="Kapatral V."/>
            <person name="Bhattacharyya A."/>
            <person name="Reznik G."/>
            <person name="Mikhailova N."/>
            <person name="Lapidus A."/>
            <person name="Chu L."/>
            <person name="Mazur M."/>
            <person name="Goltsman E."/>
            <person name="Larsen N."/>
            <person name="D'Souza M."/>
            <person name="Walunas T."/>
            <person name="Grechkin Y."/>
            <person name="Pusch G."/>
            <person name="Haselkorn R."/>
            <person name="Fonstein M."/>
            <person name="Ehrlich S.D."/>
            <person name="Overbeek R."/>
            <person name="Kyrpides N.C."/>
        </authorList>
    </citation>
    <scope>NUCLEOTIDE SEQUENCE [LARGE SCALE GENOMIC DNA]</scope>
    <source>
        <strain>ATCC 14579 / DSM 31 / CCUG 7414 / JCM 2152 / NBRC 15305 / NCIMB 9373 / NCTC 2599 / NRRL B-3711</strain>
    </source>
</reference>